<evidence type="ECO:0000250" key="1">
    <source>
        <dbReference type="UniProtKB" id="O49686"/>
    </source>
</evidence>
<evidence type="ECO:0000250" key="2">
    <source>
        <dbReference type="UniProtKB" id="Q84MC7"/>
    </source>
</evidence>
<evidence type="ECO:0000250" key="3">
    <source>
        <dbReference type="UniProtKB" id="Q8H1R0"/>
    </source>
</evidence>
<evidence type="ECO:0000250" key="4">
    <source>
        <dbReference type="UniProtKB" id="Q8VZS8"/>
    </source>
</evidence>
<evidence type="ECO:0000269" key="5">
    <source>
    </source>
</evidence>
<evidence type="ECO:0000269" key="6">
    <source>
    </source>
</evidence>
<evidence type="ECO:0000269" key="7">
    <source>
    </source>
</evidence>
<evidence type="ECO:0000303" key="8">
    <source>
    </source>
</evidence>
<evidence type="ECO:0000303" key="9">
    <source>
    </source>
</evidence>
<evidence type="ECO:0000305" key="10"/>
<evidence type="ECO:0000312" key="11">
    <source>
        <dbReference type="EMBL" id="BAD27946.1"/>
    </source>
</evidence>
<evidence type="ECO:0000312" key="12">
    <source>
        <dbReference type="EMBL" id="BAD29693.1"/>
    </source>
</evidence>
<evidence type="ECO:0000312" key="13">
    <source>
        <dbReference type="EMBL" id="BAF08378.1"/>
    </source>
</evidence>
<evidence type="ECO:0007744" key="14">
    <source>
        <dbReference type="PDB" id="5GWO"/>
    </source>
</evidence>
<evidence type="ECO:0007744" key="15">
    <source>
        <dbReference type="PDB" id="5GWP"/>
    </source>
</evidence>
<evidence type="ECO:0007829" key="16">
    <source>
        <dbReference type="PDB" id="5ZCG"/>
    </source>
</evidence>
<evidence type="ECO:0007829" key="17">
    <source>
        <dbReference type="PDB" id="5ZCU"/>
    </source>
</evidence>
<proteinExistence type="evidence at protein level"/>
<keyword id="KW-0002">3D-structure</keyword>
<keyword id="KW-0938">Abscisic acid signaling pathway</keyword>
<keyword id="KW-0963">Cytoplasm</keyword>
<keyword id="KW-1015">Disulfide bond</keyword>
<keyword id="KW-0539">Nucleus</keyword>
<keyword id="KW-0650">Protein phosphatase inhibitor</keyword>
<keyword id="KW-0675">Receptor</keyword>
<keyword id="KW-1185">Reference proteome</keyword>
<keyword id="KW-0346">Stress response</keyword>
<sequence>MVEVGGGAAEAAAGRRWRLADERCDLRAAETEYVRRFHRHEPRDHQCSSAVAKHIKAPVHLVWSLVRRFDQPQLFKPFVSRCEMKGNIEIGSVREVNVKSGLPATRSTERLELLDDNEHILSVRFVGGDHRLKNYSSILTVHPEVIDGRPGTLVIESFVVDVPEGNTKDETCYFVEALLKCNLKSLAEVSERLVVKDQTEPLDR</sequence>
<feature type="chain" id="PRO_0000444339" description="Abscisic acid receptor PYL3">
    <location>
        <begin position="1"/>
        <end position="204"/>
    </location>
</feature>
<feature type="region of interest" description="START-like" evidence="3">
    <location>
        <begin position="40"/>
        <end position="191"/>
    </location>
</feature>
<feature type="short sequence motif" description="Gate loop" evidence="4">
    <location>
        <begin position="100"/>
        <end position="104"/>
    </location>
</feature>
<feature type="short sequence motif" description="Latch loop" evidence="4">
    <location>
        <begin position="130"/>
        <end position="132"/>
    </location>
</feature>
<feature type="binding site" evidence="7 15">
    <location>
        <position position="76"/>
    </location>
    <ligand>
        <name>abscisate</name>
        <dbReference type="ChEBI" id="CHEBI:62432"/>
    </ligand>
</feature>
<feature type="binding site" evidence="1">
    <location>
        <begin position="104"/>
        <end position="109"/>
    </location>
    <ligand>
        <name>abscisate</name>
        <dbReference type="ChEBI" id="CHEBI:62432"/>
    </ligand>
</feature>
<feature type="binding site" evidence="1">
    <location>
        <begin position="131"/>
        <end position="137"/>
    </location>
    <ligand>
        <name>abscisate</name>
        <dbReference type="ChEBI" id="CHEBI:62432"/>
    </ligand>
</feature>
<feature type="binding site" evidence="1">
    <location>
        <position position="156"/>
    </location>
    <ligand>
        <name>abscisate</name>
        <dbReference type="ChEBI" id="CHEBI:62432"/>
    </ligand>
</feature>
<feature type="site" description="Involved in ABA binding" evidence="2">
    <location>
        <position position="77"/>
    </location>
</feature>
<feature type="site" description="Involved in interactions with PP2Cs" evidence="1">
    <location>
        <position position="103"/>
    </location>
</feature>
<feature type="site" description="Involved in interactions with PP2Cs" evidence="1">
    <location>
        <position position="167"/>
    </location>
</feature>
<feature type="site" description="Involved in ABA binding" evidence="2">
    <location>
        <position position="175"/>
    </location>
</feature>
<feature type="disulfide bond" evidence="7 14 15">
    <location>
        <begin position="47"/>
        <end position="172"/>
    </location>
</feature>
<feature type="strand" evidence="17">
    <location>
        <begin position="36"/>
        <end position="38"/>
    </location>
</feature>
<feature type="strand" evidence="16">
    <location>
        <begin position="46"/>
        <end position="57"/>
    </location>
</feature>
<feature type="helix" evidence="16">
    <location>
        <begin position="59"/>
        <end position="66"/>
    </location>
</feature>
<feature type="helix" evidence="16">
    <location>
        <begin position="72"/>
        <end position="74"/>
    </location>
</feature>
<feature type="strand" evidence="16">
    <location>
        <begin position="79"/>
        <end position="84"/>
    </location>
</feature>
<feature type="strand" evidence="16">
    <location>
        <begin position="93"/>
        <end position="98"/>
    </location>
</feature>
<feature type="strand" evidence="17">
    <location>
        <begin position="100"/>
        <end position="103"/>
    </location>
</feature>
<feature type="strand" evidence="16">
    <location>
        <begin position="105"/>
        <end position="115"/>
    </location>
</feature>
<feature type="turn" evidence="16">
    <location>
        <begin position="116"/>
        <end position="119"/>
    </location>
</feature>
<feature type="strand" evidence="16">
    <location>
        <begin position="120"/>
        <end position="131"/>
    </location>
</feature>
<feature type="strand" evidence="16">
    <location>
        <begin position="136"/>
        <end position="146"/>
    </location>
</feature>
<feature type="strand" evidence="16">
    <location>
        <begin position="149"/>
        <end position="161"/>
    </location>
</feature>
<feature type="helix" evidence="16">
    <location>
        <begin position="168"/>
        <end position="194"/>
    </location>
</feature>
<gene>
    <name evidence="8" type="primary">PYL3</name>
    <name evidence="9" type="synonym">PYL10</name>
    <name evidence="8" type="synonym">RCAR3</name>
    <name evidence="13" type="ordered locus">Os02g0255500</name>
    <name evidence="10" type="ordered locus">LOC_Os02g15640</name>
    <name evidence="12" type="ORF">OSJNBa0052K15.19</name>
    <name evidence="11" type="ORF">P0613F08.1</name>
</gene>
<dbReference type="EMBL" id="JX970837">
    <property type="protein sequence ID" value="AFV36782.1"/>
    <property type="molecule type" value="mRNA"/>
</dbReference>
<dbReference type="EMBL" id="AP004801">
    <property type="protein sequence ID" value="BAD27946.1"/>
    <property type="molecule type" value="Genomic_DNA"/>
</dbReference>
<dbReference type="EMBL" id="AP006844">
    <property type="protein sequence ID" value="BAD29693.1"/>
    <property type="molecule type" value="Genomic_DNA"/>
</dbReference>
<dbReference type="EMBL" id="AP008208">
    <property type="protein sequence ID" value="BAF08378.1"/>
    <property type="molecule type" value="Genomic_DNA"/>
</dbReference>
<dbReference type="EMBL" id="AP014958">
    <property type="protein sequence ID" value="BAS77948.1"/>
    <property type="molecule type" value="Genomic_DNA"/>
</dbReference>
<dbReference type="EMBL" id="AK059303">
    <property type="protein sequence ID" value="BAG86955.1"/>
    <property type="molecule type" value="mRNA"/>
</dbReference>
<dbReference type="EMBL" id="AK104581">
    <property type="protein sequence ID" value="BAG96806.1"/>
    <property type="molecule type" value="mRNA"/>
</dbReference>
<dbReference type="PDB" id="5GWO">
    <property type="method" value="X-ray"/>
    <property type="resolution" value="2.82 A"/>
    <property type="chains" value="C/D=30-204"/>
</dbReference>
<dbReference type="PDB" id="5GWP">
    <property type="method" value="X-ray"/>
    <property type="resolution" value="2.58 A"/>
    <property type="chains" value="C/D=30-204"/>
</dbReference>
<dbReference type="PDB" id="5ZCG">
    <property type="method" value="X-ray"/>
    <property type="resolution" value="2.10 A"/>
    <property type="chains" value="C/D=30-204"/>
</dbReference>
<dbReference type="PDB" id="5ZCH">
    <property type="method" value="X-ray"/>
    <property type="resolution" value="2.47 A"/>
    <property type="chains" value="C/D=30-204"/>
</dbReference>
<dbReference type="PDB" id="5ZCL">
    <property type="method" value="X-ray"/>
    <property type="resolution" value="2.66 A"/>
    <property type="chains" value="C/D=30-204"/>
</dbReference>
<dbReference type="PDB" id="5ZCU">
    <property type="method" value="X-ray"/>
    <property type="resolution" value="2.41 A"/>
    <property type="chains" value="C/D=30-204"/>
</dbReference>
<dbReference type="PDBsum" id="5GWO"/>
<dbReference type="PDBsum" id="5GWP"/>
<dbReference type="PDBsum" id="5ZCG"/>
<dbReference type="PDBsum" id="5ZCH"/>
<dbReference type="PDBsum" id="5ZCL"/>
<dbReference type="PDBsum" id="5ZCU"/>
<dbReference type="SMR" id="Q6EN42"/>
<dbReference type="FunCoup" id="Q6EN42">
    <property type="interactions" value="1206"/>
</dbReference>
<dbReference type="STRING" id="39947.Q6EN42"/>
<dbReference type="PaxDb" id="39947-Q6EN42"/>
<dbReference type="EnsemblPlants" id="Os02t0255500-01">
    <property type="protein sequence ID" value="Os02t0255500-01"/>
    <property type="gene ID" value="Os02g0255500"/>
</dbReference>
<dbReference type="GeneID" id="4328916"/>
<dbReference type="Gramene" id="Os02t0255500-01">
    <property type="protein sequence ID" value="Os02t0255500-01"/>
    <property type="gene ID" value="Os02g0255500"/>
</dbReference>
<dbReference type="KEGG" id="dosa:Os02g0255500"/>
<dbReference type="KEGG" id="osa:4328916"/>
<dbReference type="eggNOG" id="ENOG502QPYH">
    <property type="taxonomic scope" value="Eukaryota"/>
</dbReference>
<dbReference type="HOGENOM" id="CLU_077517_2_0_1"/>
<dbReference type="InParanoid" id="Q6EN42"/>
<dbReference type="OMA" id="MESEYVR"/>
<dbReference type="OrthoDB" id="4436220at2759"/>
<dbReference type="Proteomes" id="UP000000763">
    <property type="component" value="Chromosome 2"/>
</dbReference>
<dbReference type="Proteomes" id="UP000059680">
    <property type="component" value="Chromosome 2"/>
</dbReference>
<dbReference type="GO" id="GO:0005737">
    <property type="term" value="C:cytoplasm"/>
    <property type="evidence" value="ECO:0000318"/>
    <property type="project" value="GO_Central"/>
</dbReference>
<dbReference type="GO" id="GO:0005829">
    <property type="term" value="C:cytosol"/>
    <property type="evidence" value="ECO:0000314"/>
    <property type="project" value="UniProtKB"/>
</dbReference>
<dbReference type="GO" id="GO:0005634">
    <property type="term" value="C:nucleus"/>
    <property type="evidence" value="ECO:0000314"/>
    <property type="project" value="UniProtKB"/>
</dbReference>
<dbReference type="GO" id="GO:0010427">
    <property type="term" value="F:abscisic acid binding"/>
    <property type="evidence" value="ECO:0000314"/>
    <property type="project" value="UniProtKB"/>
</dbReference>
<dbReference type="GO" id="GO:0004864">
    <property type="term" value="F:protein phosphatase inhibitor activity"/>
    <property type="evidence" value="ECO:0000318"/>
    <property type="project" value="GO_Central"/>
</dbReference>
<dbReference type="GO" id="GO:0038023">
    <property type="term" value="F:signaling receptor activity"/>
    <property type="evidence" value="ECO:0000318"/>
    <property type="project" value="GO_Central"/>
</dbReference>
<dbReference type="GO" id="GO:0009738">
    <property type="term" value="P:abscisic acid-activated signaling pathway"/>
    <property type="evidence" value="ECO:0000314"/>
    <property type="project" value="UniProtKB"/>
</dbReference>
<dbReference type="GO" id="GO:0009409">
    <property type="term" value="P:response to cold"/>
    <property type="evidence" value="ECO:0000315"/>
    <property type="project" value="UniProtKB"/>
</dbReference>
<dbReference type="GO" id="GO:0009414">
    <property type="term" value="P:response to water deprivation"/>
    <property type="evidence" value="ECO:0000315"/>
    <property type="project" value="UniProtKB"/>
</dbReference>
<dbReference type="GO" id="GO:0009845">
    <property type="term" value="P:seed germination"/>
    <property type="evidence" value="ECO:0000315"/>
    <property type="project" value="UniProtKB"/>
</dbReference>
<dbReference type="CDD" id="cd07821">
    <property type="entry name" value="PYR_PYL_RCAR_like"/>
    <property type="match status" value="1"/>
</dbReference>
<dbReference type="FunFam" id="3.30.530.20:FF:000013">
    <property type="entry name" value="Abscisic acid receptor PYL9"/>
    <property type="match status" value="1"/>
</dbReference>
<dbReference type="Gene3D" id="3.30.530.20">
    <property type="match status" value="1"/>
</dbReference>
<dbReference type="InterPro" id="IPR050279">
    <property type="entry name" value="Plant_def-hormone_signal"/>
</dbReference>
<dbReference type="InterPro" id="IPR019587">
    <property type="entry name" value="Polyketide_cyclase/dehydratase"/>
</dbReference>
<dbReference type="InterPro" id="IPR023393">
    <property type="entry name" value="START-like_dom_sf"/>
</dbReference>
<dbReference type="PANTHER" id="PTHR31213:SF205">
    <property type="entry name" value="ABSCISIC ACID RECEPTOR PYL3"/>
    <property type="match status" value="1"/>
</dbReference>
<dbReference type="PANTHER" id="PTHR31213">
    <property type="entry name" value="OS08G0374000 PROTEIN-RELATED"/>
    <property type="match status" value="1"/>
</dbReference>
<dbReference type="Pfam" id="PF10604">
    <property type="entry name" value="Polyketide_cyc2"/>
    <property type="match status" value="1"/>
</dbReference>
<dbReference type="SUPFAM" id="SSF55961">
    <property type="entry name" value="Bet v1-like"/>
    <property type="match status" value="1"/>
</dbReference>
<name>PYL3_ORYSJ</name>
<organism>
    <name type="scientific">Oryza sativa subsp. japonica</name>
    <name type="common">Rice</name>
    <dbReference type="NCBI Taxonomy" id="39947"/>
    <lineage>
        <taxon>Eukaryota</taxon>
        <taxon>Viridiplantae</taxon>
        <taxon>Streptophyta</taxon>
        <taxon>Embryophyta</taxon>
        <taxon>Tracheophyta</taxon>
        <taxon>Spermatophyta</taxon>
        <taxon>Magnoliopsida</taxon>
        <taxon>Liliopsida</taxon>
        <taxon>Poales</taxon>
        <taxon>Poaceae</taxon>
        <taxon>BOP clade</taxon>
        <taxon>Oryzoideae</taxon>
        <taxon>Oryzeae</taxon>
        <taxon>Oryzinae</taxon>
        <taxon>Oryza</taxon>
        <taxon>Oryza sativa</taxon>
    </lineage>
</organism>
<reference key="1">
    <citation type="journal article" date="2012" name="J. Exp. Bot.">
        <title>A rice orthologue of the ABA receptor, OsPYL/RCAR5, is a positive regulator of the ABA signal transduction pathway in seed germination and early seedling growth.</title>
        <authorList>
            <person name="Kim H."/>
            <person name="Hwang H."/>
            <person name="Hong J.W."/>
            <person name="Lee Y.N."/>
            <person name="Ahn I.P."/>
            <person name="Yoon I.S."/>
            <person name="Yoo S.D."/>
            <person name="Lee S."/>
            <person name="Lee S.C."/>
            <person name="Kim B.G."/>
        </authorList>
    </citation>
    <scope>NUCLEOTIDE SEQUENCE [MRNA]</scope>
    <source>
        <strain>cv. Dongjin</strain>
    </source>
</reference>
<reference key="2">
    <citation type="journal article" date="2005" name="Nature">
        <title>The map-based sequence of the rice genome.</title>
        <authorList>
            <consortium name="International rice genome sequencing project (IRGSP)"/>
        </authorList>
    </citation>
    <scope>NUCLEOTIDE SEQUENCE [LARGE SCALE GENOMIC DNA]</scope>
    <source>
        <strain>cv. Nipponbare</strain>
    </source>
</reference>
<reference key="3">
    <citation type="journal article" date="2008" name="Nucleic Acids Res.">
        <title>The rice annotation project database (RAP-DB): 2008 update.</title>
        <authorList>
            <consortium name="The rice annotation project (RAP)"/>
        </authorList>
    </citation>
    <scope>GENOME REANNOTATION</scope>
    <source>
        <strain>cv. Nipponbare</strain>
    </source>
</reference>
<reference key="4">
    <citation type="journal article" date="2013" name="Rice">
        <title>Improvement of the Oryza sativa Nipponbare reference genome using next generation sequence and optical map data.</title>
        <authorList>
            <person name="Kawahara Y."/>
            <person name="de la Bastide M."/>
            <person name="Hamilton J.P."/>
            <person name="Kanamori H."/>
            <person name="McCombie W.R."/>
            <person name="Ouyang S."/>
            <person name="Schwartz D.C."/>
            <person name="Tanaka T."/>
            <person name="Wu J."/>
            <person name="Zhou S."/>
            <person name="Childs K.L."/>
            <person name="Davidson R.M."/>
            <person name="Lin H."/>
            <person name="Quesada-Ocampo L."/>
            <person name="Vaillancourt B."/>
            <person name="Sakai H."/>
            <person name="Lee S.S."/>
            <person name="Kim J."/>
            <person name="Numa H."/>
            <person name="Itoh T."/>
            <person name="Buell C.R."/>
            <person name="Matsumoto T."/>
        </authorList>
    </citation>
    <scope>GENOME REANNOTATION</scope>
    <source>
        <strain>cv. Nipponbare</strain>
    </source>
</reference>
<reference key="5">
    <citation type="journal article" date="2003" name="Science">
        <title>Collection, mapping, and annotation of over 28,000 cDNA clones from japonica rice.</title>
        <authorList>
            <consortium name="The rice full-length cDNA consortium"/>
        </authorList>
    </citation>
    <scope>NUCLEOTIDE SEQUENCE [LARGE SCALE MRNA]</scope>
    <source>
        <strain>cv. Nipponbare</strain>
    </source>
</reference>
<reference key="6">
    <citation type="journal article" date="2014" name="PLoS ONE">
        <title>Identification and characterization of ABA receptors in Oryza sativa.</title>
        <authorList>
            <person name="He Y."/>
            <person name="Hao Q."/>
            <person name="Li W."/>
            <person name="Yan C."/>
            <person name="Yan N."/>
            <person name="Yin P."/>
        </authorList>
    </citation>
    <scope>FUNCTION</scope>
    <scope>SUBUNIT</scope>
</reference>
<reference key="7">
    <citation type="journal article" date="2015" name="Rice">
        <title>Characterization and functional analysis of pyrabactin resistance-like abscisic acid receptor family in rice.</title>
        <authorList>
            <person name="Tian X."/>
            <person name="Wang Z."/>
            <person name="Li X."/>
            <person name="Lv T."/>
            <person name="Liu H."/>
            <person name="Wang L."/>
            <person name="Niu H."/>
            <person name="Bu Q."/>
        </authorList>
    </citation>
    <scope>INTERACTION WITH PP2C30 AND PP2C53</scope>
    <scope>SUBCELLULAR LOCATION</scope>
    <scope>INDUCTION</scope>
</reference>
<reference key="8">
    <citation type="journal article" date="2017" name="Mol. Plant">
        <title>Modulation of ABA signaling by altering VxGL motif of PP2Cs in Oryza sativa.</title>
        <authorList>
            <person name="Han S."/>
            <person name="Min M.K."/>
            <person name="Lee S.Y."/>
            <person name="Lim C.W."/>
            <person name="Bhatnagar N."/>
            <person name="Lee Y."/>
            <person name="Shin D."/>
            <person name="Chung K.Y."/>
            <person name="Lee S.C."/>
            <person name="Kim B.G."/>
            <person name="Lee S."/>
        </authorList>
    </citation>
    <scope>X-RAY CRYSTALLOGRAPHY (2.58 ANGSTROMS) OF 30-204 IN COMPLEX WITH ABSCISIC ACID</scope>
    <scope>FUNCTION</scope>
    <scope>INTERACTION WITH PP2C50</scope>
    <scope>DISULFIDE BONDS</scope>
</reference>
<comment type="function">
    <text evidence="5 6 7">Involved in abscisic acid (ABA) signaling during seed germination and abiotic stress response. Acts as a positive regulator of ABA-mediated inhibition of seed germination, and tolerance to drought and cold stresses (PubMed:26362328). Together with PP2C50 and SAPK10, may form an ABA signaling module involved in stress response (PubMed:28827170). Inhibits the protein phosphatases PP2C06 and PP2C09 when activated by abscisic acid (ABA) (PubMed:24743650).</text>
</comment>
<comment type="subunit">
    <text evidence="5 6 7">Monomer (PubMed:24743650). Interacts with PP2C50. Binding to PP2C50 is dependent on the presence of abscisic acid (ABA) (PubMed:28827170). Interacts with PP2C30 and PP2C53 (PubMed:26362328).</text>
</comment>
<comment type="subcellular location">
    <subcellularLocation>
        <location evidence="6">Cytoplasm</location>
        <location evidence="6">Cytosol</location>
    </subcellularLocation>
    <subcellularLocation>
        <location evidence="6">Nucleus</location>
    </subcellularLocation>
</comment>
<comment type="induction">
    <text evidence="6">Repressed by abscisic acid (ABA).</text>
</comment>
<comment type="miscellaneous">
    <text evidence="6">Plants overexpressing PYL3 exhibit abscisic acid (ABA) hypersensitive phenotype during seed germination. Plants overexpressing PYL3 exhibit tolerance to cold and drought stresses.</text>
</comment>
<comment type="similarity">
    <text evidence="10">Belongs to the PYR/PYL/RCAR abscisic acid intracellular receptor family.</text>
</comment>
<accession>Q6EN42</accession>
<accession>K4N2F7</accession>
<protein>
    <recommendedName>
        <fullName evidence="10">Abscisic acid receptor PYL3</fullName>
    </recommendedName>
    <alternativeName>
        <fullName evidence="9">PYR1-like protein 10</fullName>
        <shortName evidence="9">OsPYL10</shortName>
    </alternativeName>
    <alternativeName>
        <fullName evidence="8">PYR1-like protein 3</fullName>
        <shortName evidence="8">OsPYL3</shortName>
    </alternativeName>
    <alternativeName>
        <fullName evidence="10">Regulatory components of ABA receptor 3</fullName>
    </alternativeName>
</protein>